<sequence length="235" mass="27142">MEKIYTWLKTNSYIVHHVSTSLNIISFIIVLIWIFESTIKEKLNIIFTVNLEAIVVFISILIVGLNQLLQKLLIEAEYSPAFALAVGYFKNFIFPAITQIKENGEVNPKICIYKPKHFDELTSTNIDMIKAELTNKKYNLSEINLSLKGARARDILTLNKKSKIHSYFDFPNTLLSLYSYVDFKIASSNNNSSELKKKKFVELLIEQFYLKLNELIQENNLTNNITFCDKNLQGL</sequence>
<organism>
    <name type="scientific">Flavobacteriaceae sp. genome_bin_11</name>
    <dbReference type="NCBI Taxonomy" id="2778089"/>
    <lineage>
        <taxon>Bacteria</taxon>
        <taxon>Pseudomonadati</taxon>
        <taxon>Bacteroidota</taxon>
        <taxon>Flavobacteriia</taxon>
        <taxon>Flavobacteriales</taxon>
        <taxon>Flavobacteriaceae</taxon>
    </lineage>
</organism>
<gene>
    <name evidence="5" type="primary">cap13</name>
    <name type="ORF">Ga0077528_101611</name>
    <name type="ORF">IMG 2624319773</name>
</gene>
<feature type="chain" id="PRO_0000451882" description="CD-NTase-associated protein 13">
    <location>
        <begin position="1"/>
        <end position="235"/>
    </location>
</feature>
<feature type="transmembrane region" description="Helical" evidence="1">
    <location>
        <begin position="14"/>
        <end position="34"/>
    </location>
</feature>
<feature type="transmembrane region" description="Helical" evidence="1">
    <location>
        <begin position="45"/>
        <end position="65"/>
    </location>
</feature>
<feature type="helix" evidence="8">
    <location>
        <begin position="80"/>
        <end position="91"/>
    </location>
</feature>
<feature type="helix" evidence="8">
    <location>
        <begin position="93"/>
        <end position="102"/>
    </location>
</feature>
<feature type="strand" evidence="8">
    <location>
        <begin position="109"/>
        <end position="113"/>
    </location>
</feature>
<feature type="helix" evidence="8">
    <location>
        <begin position="118"/>
        <end position="121"/>
    </location>
</feature>
<feature type="helix" evidence="8">
    <location>
        <begin position="123"/>
        <end position="135"/>
    </location>
</feature>
<feature type="strand" evidence="8">
    <location>
        <begin position="138"/>
        <end position="144"/>
    </location>
</feature>
<feature type="strand" evidence="8">
    <location>
        <begin position="147"/>
        <end position="149"/>
    </location>
</feature>
<feature type="strand" evidence="8">
    <location>
        <begin position="155"/>
        <end position="161"/>
    </location>
</feature>
<feature type="strand" evidence="8">
    <location>
        <begin position="164"/>
        <end position="169"/>
    </location>
</feature>
<feature type="helix" evidence="8">
    <location>
        <begin position="172"/>
        <end position="176"/>
    </location>
</feature>
<feature type="helix" evidence="8">
    <location>
        <begin position="177"/>
        <end position="181"/>
    </location>
</feature>
<feature type="helix" evidence="8">
    <location>
        <begin position="194"/>
        <end position="218"/>
    </location>
</feature>
<feature type="turn" evidence="8">
    <location>
        <begin position="222"/>
        <end position="224"/>
    </location>
</feature>
<feature type="strand" evidence="8">
    <location>
        <begin position="225"/>
        <end position="228"/>
    </location>
</feature>
<name>CAP13_FLASX</name>
<reference key="1">
    <citation type="journal article" date="2020" name="Nat. Microbiol.">
        <title>Diversity and classification of cyclic-oligonucleotide-based anti-phage signalling systems.</title>
        <authorList>
            <person name="Millman A."/>
            <person name="Melamed S."/>
            <person name="Amitai G."/>
            <person name="Sorek R."/>
        </authorList>
    </citation>
    <scope>CLASSIFICATION AND NOMENCLATURE</scope>
</reference>
<reference evidence="7" key="2">
    <citation type="journal article" date="2020" name="Nature">
        <title>STING cyclic dinucleotide sensing originated in bacteria.</title>
        <authorList>
            <person name="Morehouse B.R."/>
            <person name="Govande A.A."/>
            <person name="Millman A."/>
            <person name="Keszei A.F.A."/>
            <person name="Lowey B."/>
            <person name="Ofir G."/>
            <person name="Shao S."/>
            <person name="Sorek R."/>
            <person name="Kranzusch P.J."/>
        </authorList>
    </citation>
    <scope>X-RAY CRYSTALLOGRAPHY (1.78 ANGSTROMS) OF 75-235 IN COMPLEX WITH 3'3'-CGAMP</scope>
    <scope>C-DI-GMP-BINDING</scope>
    <scope>NUCLEOTIDE-BINDING</scope>
    <scope>SUBUNIT</scope>
    <scope>DOMAIN</scope>
</reference>
<keyword id="KW-0002">3D-structure</keyword>
<keyword id="KW-0051">Antiviral defense</keyword>
<keyword id="KW-0997">Cell inner membrane</keyword>
<keyword id="KW-1003">Cell membrane</keyword>
<keyword id="KW-0472">Membrane</keyword>
<keyword id="KW-0547">Nucleotide-binding</keyword>
<keyword id="KW-0812">Transmembrane</keyword>
<keyword id="KW-1133">Transmembrane helix</keyword>
<protein>
    <recommendedName>
        <fullName evidence="5">CD-NTase-associated protein 13</fullName>
        <shortName evidence="5">Cap13</shortName>
    </recommendedName>
    <alternativeName>
        <fullName evidence="4">TM-STING</fullName>
        <shortName evidence="4">FsSTING</shortName>
    </alternativeName>
</protein>
<comment type="function">
    <text evidence="3 6">Effector protein of a CBASS antivirus system (Probable) (PubMed:32877915). CBASS (cyclic oligonucleotide-based antiphage signaling system) provides immunity against bacteriophage. The CD-NTase protein synthesizes cyclic nucleotides in response to infection; these serve as specific second messenger signals. The signals activate a diverse range of effectors, leading to bacterial cell death and thus abortive phage infection. A type I-D(GG) CBASS system (PubMed:32839535).</text>
</comment>
<comment type="function">
    <text evidence="2 6">Binds cyclic dinucleotides: binds c-di-GMP (synthesized by the cognate CdnE encoded upstream in the same operon), cyclic 3'3'-cyclic GMP-AMP (3'3'-cGAMP) but not cUMP-AMP (PubMed:32877915). The effector protein for this CBASS system, its activity is stimulated by c-di-GMP and leads to cell death (Probable).</text>
</comment>
<comment type="subunit">
    <text evidence="2">Homodimer.</text>
</comment>
<comment type="subcellular location">
    <subcellularLocation>
        <location evidence="5">Cell inner membrane</location>
        <topology evidence="1">Multi-pass membrane protein</topology>
    </subcellularLocation>
</comment>
<comment type="domain">
    <text evidence="2 6">The cyclic nucleotide binds in the C-terminal bacterial STING region (PubMed:32877915). Comparison of structures from 2 different bacteria suggests that cyclic nucleotide binding causes domain rotation, which forms a lid and seals the nucleotide-binding pocket (Probable).</text>
</comment>
<comment type="similarity">
    <text evidence="5">In the C-terminal section; belongs to the bacterial STING family.</text>
</comment>
<dbReference type="PDB" id="6WT4">
    <property type="method" value="X-ray"/>
    <property type="resolution" value="1.78 A"/>
    <property type="chains" value="A/B=75-235"/>
</dbReference>
<dbReference type="PDBsum" id="6WT4"/>
<dbReference type="SMR" id="P0DUD7"/>
<dbReference type="GO" id="GO:0005886">
    <property type="term" value="C:plasma membrane"/>
    <property type="evidence" value="ECO:0007669"/>
    <property type="project" value="UniProtKB-SubCell"/>
</dbReference>
<dbReference type="GO" id="GO:0000166">
    <property type="term" value="F:nucleotide binding"/>
    <property type="evidence" value="ECO:0007669"/>
    <property type="project" value="UniProtKB-KW"/>
</dbReference>
<dbReference type="GO" id="GO:0051607">
    <property type="term" value="P:defense response to virus"/>
    <property type="evidence" value="ECO:0007669"/>
    <property type="project" value="UniProtKB-KW"/>
</dbReference>
<dbReference type="CDD" id="cd22659">
    <property type="entry name" value="STING_bact-like"/>
    <property type="match status" value="1"/>
</dbReference>
<dbReference type="InterPro" id="IPR046876">
    <property type="entry name" value="Prok_STING"/>
</dbReference>
<dbReference type="Pfam" id="PF20300">
    <property type="entry name" value="prok_STING"/>
    <property type="match status" value="1"/>
</dbReference>
<accession>P0DUD7</accession>
<proteinExistence type="evidence at protein level"/>
<evidence type="ECO:0000255" key="1"/>
<evidence type="ECO:0000269" key="2">
    <source>
    </source>
</evidence>
<evidence type="ECO:0000303" key="3">
    <source>
    </source>
</evidence>
<evidence type="ECO:0000303" key="4">
    <source>
    </source>
</evidence>
<evidence type="ECO:0000305" key="5"/>
<evidence type="ECO:0000305" key="6">
    <source>
    </source>
</evidence>
<evidence type="ECO:0007744" key="7">
    <source>
        <dbReference type="PDB" id="6WT4"/>
    </source>
</evidence>
<evidence type="ECO:0007829" key="8">
    <source>
        <dbReference type="PDB" id="6WT4"/>
    </source>
</evidence>